<feature type="chain" id="PRO_1000133911" description="Bifunctional glutamine synthetase adenylyltransferase/adenylyl-removing enzyme">
    <location>
        <begin position="1"/>
        <end position="947"/>
    </location>
</feature>
<feature type="region of interest" description="Adenylyl removase" evidence="1">
    <location>
        <begin position="1"/>
        <end position="440"/>
    </location>
</feature>
<feature type="region of interest" description="Adenylyl transferase" evidence="1">
    <location>
        <begin position="450"/>
        <end position="947"/>
    </location>
</feature>
<sequence>MTPLSSPLSQYWQTVVERLPEGFTETSLSVQAKSVLTFSDFALDSVIAHPEWLAELESASPQADEWRHYAGWLQEALAGVCDDASLMRELRFFRRRIMVRIAWAQTLSLVDDETILQQLSHLAETLIVGARDWLYAACCREWGTPCNPQGVPQPLLILGMGKLGGGELNFSSDIDLIFAWPEHGETRGGRRELDNAQFFTRLGQRLIKALDQPTMDGFVYRVDMRLRPFGDSGPLVLSFAALEDYYQEQGRDWERYAMVKARLMGDNDDAWSRELRAMLRPFVFRRYIDFSVIQSLRNMKGMIAREVRRRGLKDNIKLGAGGIREIEFIVQVFQLIRGGREPSLQSRSLLPTLDAIAALHLLPENDVAQLRVAYLFLRRLENLLQSINDEQTQTLPADDLNRARLAWGMKAENWPQLVGELTDHMANVRRVFNELIGDDEADTPQEEERSEPWRDVWQDALQEDDSTPVLAHLADEDRRQVLTLIADFRKELDKRPIGPRGRQVLDQLMPHLLADVCSREDAAVTLSRITPLLAGIVTRTTYLELLSEFPGALKHLIMLCAASPMIASQLARYPLLLDELLDPGTLYQPTATDAYRDELRQYLLRVPEEDEEQQLEALRQFKQAQLLRIAAADIAGTLPVMKVSDHLTWLAEAMIDAVVQQAWTQMVARYGQPAHLDERQGRGFAVVGYGKLGGWELGYSSDLDLIFLHDCPMDVMTNGEREIDGRQFYLRLAQRIMHLFSTRTSSGILYEVDARLRPSGAAGMLVTSADAFADYQQHEAWTWEHQALVRARVVYGDPQLTSQFDTVRRTIMTTARDGKTLQTEVREMREKMRAHLGNKHRDRFDIKADEGGITDIEFIAQYLVLRYAHEKPKLTRWSDNVRILELLAQNGIMDEHEAQALTVAYTTLRDELHHLALQELPGHVAQTCFSKERALVQASWRKWLVAV</sequence>
<comment type="function">
    <text evidence="1">Involved in the regulation of glutamine synthetase GlnA, a key enzyme in the process to assimilate ammonia. When cellular nitrogen levels are high, the C-terminal adenylyl transferase (AT) inactivates GlnA by covalent transfer of an adenylyl group from ATP to specific tyrosine residue of GlnA, thus reducing its activity. Conversely, when nitrogen levels are low, the N-terminal adenylyl removase (AR) activates GlnA by removing the adenylyl group by phosphorolysis, increasing its activity. The regulatory region of GlnE binds the signal transduction protein PII (GlnB) which indicates the nitrogen status of the cell.</text>
</comment>
<comment type="catalytic activity">
    <reaction evidence="1">
        <text>[glutamine synthetase]-O(4)-(5'-adenylyl)-L-tyrosine + phosphate = [glutamine synthetase]-L-tyrosine + ADP</text>
        <dbReference type="Rhea" id="RHEA:43716"/>
        <dbReference type="Rhea" id="RHEA-COMP:10660"/>
        <dbReference type="Rhea" id="RHEA-COMP:10661"/>
        <dbReference type="ChEBI" id="CHEBI:43474"/>
        <dbReference type="ChEBI" id="CHEBI:46858"/>
        <dbReference type="ChEBI" id="CHEBI:83624"/>
        <dbReference type="ChEBI" id="CHEBI:456216"/>
        <dbReference type="EC" id="2.7.7.89"/>
    </reaction>
</comment>
<comment type="catalytic activity">
    <reaction evidence="1">
        <text>[glutamine synthetase]-L-tyrosine + ATP = [glutamine synthetase]-O(4)-(5'-adenylyl)-L-tyrosine + diphosphate</text>
        <dbReference type="Rhea" id="RHEA:18589"/>
        <dbReference type="Rhea" id="RHEA-COMP:10660"/>
        <dbReference type="Rhea" id="RHEA-COMP:10661"/>
        <dbReference type="ChEBI" id="CHEBI:30616"/>
        <dbReference type="ChEBI" id="CHEBI:33019"/>
        <dbReference type="ChEBI" id="CHEBI:46858"/>
        <dbReference type="ChEBI" id="CHEBI:83624"/>
        <dbReference type="EC" id="2.7.7.42"/>
    </reaction>
</comment>
<comment type="cofactor">
    <cofactor evidence="1">
        <name>Mg(2+)</name>
        <dbReference type="ChEBI" id="CHEBI:18420"/>
    </cofactor>
</comment>
<comment type="similarity">
    <text evidence="1">Belongs to the GlnE family.</text>
</comment>
<evidence type="ECO:0000255" key="1">
    <source>
        <dbReference type="HAMAP-Rule" id="MF_00802"/>
    </source>
</evidence>
<protein>
    <recommendedName>
        <fullName evidence="1">Bifunctional glutamine synthetase adenylyltransferase/adenylyl-removing enzyme</fullName>
    </recommendedName>
    <alternativeName>
        <fullName evidence="1">ATP:glutamine synthetase adenylyltransferase</fullName>
    </alternativeName>
    <alternativeName>
        <fullName evidence="1">ATase</fullName>
    </alternativeName>
    <domain>
        <recommendedName>
            <fullName evidence="1">Glutamine synthetase adenylyl-L-tyrosine phosphorylase</fullName>
            <ecNumber evidence="1">2.7.7.89</ecNumber>
        </recommendedName>
        <alternativeName>
            <fullName evidence="1">Adenylyl removase</fullName>
            <shortName evidence="1">AR</shortName>
            <shortName evidence="1">AT-N</shortName>
        </alternativeName>
    </domain>
    <domain>
        <recommendedName>
            <fullName evidence="1">Glutamine synthetase adenylyl transferase</fullName>
            <ecNumber evidence="1">2.7.7.42</ecNumber>
        </recommendedName>
        <alternativeName>
            <fullName evidence="1">Adenylyl transferase</fullName>
            <shortName evidence="1">AT</shortName>
            <shortName evidence="1">AT-C</shortName>
        </alternativeName>
    </domain>
</protein>
<dbReference type="EC" id="2.7.7.89" evidence="1"/>
<dbReference type="EC" id="2.7.7.42" evidence="1"/>
<dbReference type="EMBL" id="CP001144">
    <property type="protein sequence ID" value="ACH75656.1"/>
    <property type="molecule type" value="Genomic_DNA"/>
</dbReference>
<dbReference type="RefSeq" id="WP_000188305.1">
    <property type="nucleotide sequence ID" value="NC_011205.1"/>
</dbReference>
<dbReference type="SMR" id="B5FHT6"/>
<dbReference type="KEGG" id="sed:SeD_A3557"/>
<dbReference type="HOGENOM" id="CLU_006233_0_1_6"/>
<dbReference type="Proteomes" id="UP000008322">
    <property type="component" value="Chromosome"/>
</dbReference>
<dbReference type="GO" id="GO:0005829">
    <property type="term" value="C:cytosol"/>
    <property type="evidence" value="ECO:0007669"/>
    <property type="project" value="TreeGrafter"/>
</dbReference>
<dbReference type="GO" id="GO:0008882">
    <property type="term" value="F:[glutamate-ammonia-ligase] adenylyltransferase activity"/>
    <property type="evidence" value="ECO:0007669"/>
    <property type="project" value="UniProtKB-UniRule"/>
</dbReference>
<dbReference type="GO" id="GO:0047388">
    <property type="term" value="F:[glutamine synthetase]-adenylyl-L-tyrosine phosphorylase activity"/>
    <property type="evidence" value="ECO:0007669"/>
    <property type="project" value="UniProtKB-EC"/>
</dbReference>
<dbReference type="GO" id="GO:0005524">
    <property type="term" value="F:ATP binding"/>
    <property type="evidence" value="ECO:0007669"/>
    <property type="project" value="UniProtKB-UniRule"/>
</dbReference>
<dbReference type="GO" id="GO:0000287">
    <property type="term" value="F:magnesium ion binding"/>
    <property type="evidence" value="ECO:0007669"/>
    <property type="project" value="UniProtKB-UniRule"/>
</dbReference>
<dbReference type="GO" id="GO:0000820">
    <property type="term" value="P:regulation of glutamine family amino acid metabolic process"/>
    <property type="evidence" value="ECO:0007669"/>
    <property type="project" value="UniProtKB-UniRule"/>
</dbReference>
<dbReference type="CDD" id="cd05401">
    <property type="entry name" value="NT_GlnE_GlnD_like"/>
    <property type="match status" value="2"/>
</dbReference>
<dbReference type="FunFam" id="1.10.4050.10:FF:000001">
    <property type="entry name" value="Bifunctional glutamine synthetase adenylyltransferase/adenylyl-removing enzyme"/>
    <property type="match status" value="1"/>
</dbReference>
<dbReference type="FunFam" id="1.20.120.1510:FF:000001">
    <property type="entry name" value="Bifunctional glutamine synthetase adenylyltransferase/adenylyl-removing enzyme"/>
    <property type="match status" value="1"/>
</dbReference>
<dbReference type="FunFam" id="1.20.120.330:FF:000005">
    <property type="entry name" value="Bifunctional glutamine synthetase adenylyltransferase/adenylyl-removing enzyme"/>
    <property type="match status" value="1"/>
</dbReference>
<dbReference type="FunFam" id="1.20.120.330:FF:000008">
    <property type="entry name" value="Bifunctional glutamine synthetase adenylyltransferase/adenylyl-removing enzyme"/>
    <property type="match status" value="1"/>
</dbReference>
<dbReference type="FunFam" id="3.30.460.10:FF:000009">
    <property type="entry name" value="Bifunctional glutamine synthetase adenylyltransferase/adenylyl-removing enzyme"/>
    <property type="match status" value="1"/>
</dbReference>
<dbReference type="FunFam" id="3.30.460.10:FF:000014">
    <property type="entry name" value="Bifunctional glutamine synthetase adenylyltransferase/adenylyl-removing enzyme"/>
    <property type="match status" value="1"/>
</dbReference>
<dbReference type="Gene3D" id="1.20.120.1510">
    <property type="match status" value="1"/>
</dbReference>
<dbReference type="Gene3D" id="3.30.460.10">
    <property type="entry name" value="Beta Polymerase, domain 2"/>
    <property type="match status" value="2"/>
</dbReference>
<dbReference type="Gene3D" id="1.10.4050.10">
    <property type="entry name" value="Glutamine synthase adenylyltransferase GlnE"/>
    <property type="match status" value="1"/>
</dbReference>
<dbReference type="Gene3D" id="1.20.120.330">
    <property type="entry name" value="Nucleotidyltransferases domain 2"/>
    <property type="match status" value="2"/>
</dbReference>
<dbReference type="HAMAP" id="MF_00802">
    <property type="entry name" value="GlnE"/>
    <property type="match status" value="1"/>
</dbReference>
<dbReference type="InterPro" id="IPR023057">
    <property type="entry name" value="GlnE"/>
</dbReference>
<dbReference type="InterPro" id="IPR005190">
    <property type="entry name" value="GlnE_rpt_dom"/>
</dbReference>
<dbReference type="InterPro" id="IPR043519">
    <property type="entry name" value="NT_sf"/>
</dbReference>
<dbReference type="InterPro" id="IPR013546">
    <property type="entry name" value="PII_UdlTrfase/GS_AdlTrfase"/>
</dbReference>
<dbReference type="NCBIfam" id="NF008292">
    <property type="entry name" value="PRK11072.1"/>
    <property type="match status" value="1"/>
</dbReference>
<dbReference type="PANTHER" id="PTHR30621:SF0">
    <property type="entry name" value="BIFUNCTIONAL GLUTAMINE SYNTHETASE ADENYLYLTRANSFERASE_ADENYLYL-REMOVING ENZYME"/>
    <property type="match status" value="1"/>
</dbReference>
<dbReference type="PANTHER" id="PTHR30621">
    <property type="entry name" value="GLUTAMINE SYNTHETASE ADENYLYLTRANSFERASE"/>
    <property type="match status" value="1"/>
</dbReference>
<dbReference type="Pfam" id="PF08335">
    <property type="entry name" value="GlnD_UR_UTase"/>
    <property type="match status" value="2"/>
</dbReference>
<dbReference type="Pfam" id="PF03710">
    <property type="entry name" value="GlnE"/>
    <property type="match status" value="2"/>
</dbReference>
<dbReference type="SUPFAM" id="SSF81301">
    <property type="entry name" value="Nucleotidyltransferase"/>
    <property type="match status" value="2"/>
</dbReference>
<dbReference type="SUPFAM" id="SSF81593">
    <property type="entry name" value="Nucleotidyltransferase substrate binding subunit/domain"/>
    <property type="match status" value="2"/>
</dbReference>
<reference key="1">
    <citation type="journal article" date="2011" name="J. Bacteriol.">
        <title>Comparative genomics of 28 Salmonella enterica isolates: evidence for CRISPR-mediated adaptive sublineage evolution.</title>
        <authorList>
            <person name="Fricke W.F."/>
            <person name="Mammel M.K."/>
            <person name="McDermott P.F."/>
            <person name="Tartera C."/>
            <person name="White D.G."/>
            <person name="Leclerc J.E."/>
            <person name="Ravel J."/>
            <person name="Cebula T.A."/>
        </authorList>
    </citation>
    <scope>NUCLEOTIDE SEQUENCE [LARGE SCALE GENOMIC DNA]</scope>
    <source>
        <strain>CT_02021853</strain>
    </source>
</reference>
<keyword id="KW-0067">ATP-binding</keyword>
<keyword id="KW-0460">Magnesium</keyword>
<keyword id="KW-0511">Multifunctional enzyme</keyword>
<keyword id="KW-0547">Nucleotide-binding</keyword>
<keyword id="KW-0548">Nucleotidyltransferase</keyword>
<keyword id="KW-0808">Transferase</keyword>
<name>GLNE_SALDC</name>
<gene>
    <name evidence="1" type="primary">glnE</name>
    <name type="ordered locus">SeD_A3557</name>
</gene>
<organism>
    <name type="scientific">Salmonella dublin (strain CT_02021853)</name>
    <dbReference type="NCBI Taxonomy" id="439851"/>
    <lineage>
        <taxon>Bacteria</taxon>
        <taxon>Pseudomonadati</taxon>
        <taxon>Pseudomonadota</taxon>
        <taxon>Gammaproteobacteria</taxon>
        <taxon>Enterobacterales</taxon>
        <taxon>Enterobacteriaceae</taxon>
        <taxon>Salmonella</taxon>
    </lineage>
</organism>
<accession>B5FHT6</accession>
<proteinExistence type="inferred from homology"/>